<protein>
    <recommendedName>
        <fullName evidence="2">Pescadillo homolog</fullName>
    </recommendedName>
</protein>
<organism>
    <name type="scientific">Drosophila pseudoobscura pseudoobscura</name>
    <name type="common">Fruit fly</name>
    <dbReference type="NCBI Taxonomy" id="46245"/>
    <lineage>
        <taxon>Eukaryota</taxon>
        <taxon>Metazoa</taxon>
        <taxon>Ecdysozoa</taxon>
        <taxon>Arthropoda</taxon>
        <taxon>Hexapoda</taxon>
        <taxon>Insecta</taxon>
        <taxon>Pterygota</taxon>
        <taxon>Neoptera</taxon>
        <taxon>Endopterygota</taxon>
        <taxon>Diptera</taxon>
        <taxon>Brachycera</taxon>
        <taxon>Muscomorpha</taxon>
        <taxon>Ephydroidea</taxon>
        <taxon>Drosophilidae</taxon>
        <taxon>Drosophila</taxon>
        <taxon>Sophophora</taxon>
    </lineage>
</organism>
<name>PESC_DROPS</name>
<proteinExistence type="inferred from homology"/>
<comment type="function">
    <text evidence="2">Required for maturation of ribosomal RNAs and formation of the large ribosomal subunit.</text>
</comment>
<comment type="subcellular location">
    <subcellularLocation>
        <location evidence="2">Nucleus</location>
        <location evidence="2">Nucleolus</location>
    </subcellularLocation>
    <subcellularLocation>
        <location evidence="2">Nucleus</location>
        <location evidence="2">Nucleoplasm</location>
    </subcellularLocation>
</comment>
<comment type="similarity">
    <text evidence="2">Belongs to the pescadillo family.</text>
</comment>
<accession>Q29NB4</accession>
<sequence length="631" mass="74524">MRRPKKYEAGEATQYISRRAAIRKLQLSLNDFRRLCILKGVYPREPKHRRRAQKGSSEIKILYHTKDIRFLLHESIVWTLRDYKIFAKKTSRDRAIKDFRNLKRRLALFPEIKLDHIVKERYPTFIDALKDLDDCLTLLFLFSTFPSLHLIPREQSNLCRRLTIEFLHYVIASKSLRKVFISIKGYYFQAEIKGQKVTWIMPHYYPFKPQSRQEVDFKVMSIFVEFYTILQGFTNFRLFHGLNLAYPPQFPSSLLQDNEDTFKDEASFVSDRIAALNFELLRTDKVQEDEEEPDIDMELLEQDGDSKRIIKMKQEAQEVSRLRTLFKGLKFFINREVPREPLVILIRSFGGKVSWDASVFPGATFAENDETITHQIVDRPSLSTQYISRDYIQPQWLFDCVNQRQLLPTNDYFLGETLPPHLSPFVDSKRDSYIPPEEKALHDPSLIETHEQSEEESEEDEAEKEEEEADQELLDAQLQLAYQQETAEYKKYGGPDGVNEDEEDLSEEDDEEDDDEEDVDKEDVDEQTKRKQQEKEKMSVQSGKVHKVNKRQVHKAEVDEHRLQARMVKPRHRNLFRKLIREKQTKEKEEWLLRKKRRNIDADNKEAKKAAKREARKQAAEAAARAAKLVK</sequence>
<dbReference type="EMBL" id="CH379060">
    <property type="protein sequence ID" value="EAL33428.2"/>
    <property type="molecule type" value="Genomic_DNA"/>
</dbReference>
<dbReference type="SMR" id="Q29NB4"/>
<dbReference type="FunCoup" id="Q29NB4">
    <property type="interactions" value="2367"/>
</dbReference>
<dbReference type="STRING" id="46245.Q29NB4"/>
<dbReference type="EnsemblMetazoa" id="FBtr0281893">
    <property type="protein sequence ID" value="FBpp0280331"/>
    <property type="gene ID" value="FBgn0078143"/>
</dbReference>
<dbReference type="KEGG" id="dpo:4817364"/>
<dbReference type="eggNOG" id="KOG2481">
    <property type="taxonomic scope" value="Eukaryota"/>
</dbReference>
<dbReference type="HOGENOM" id="CLU_019619_0_0_1"/>
<dbReference type="InParanoid" id="Q29NB4"/>
<dbReference type="OMA" id="QKVTWIV"/>
<dbReference type="Proteomes" id="UP000001819">
    <property type="component" value="Chromosome 4"/>
</dbReference>
<dbReference type="Bgee" id="FBgn0078143">
    <property type="expression patterns" value="Expressed in female reproductive system and 3 other cell types or tissues"/>
</dbReference>
<dbReference type="GO" id="GO:0005730">
    <property type="term" value="C:nucleolus"/>
    <property type="evidence" value="ECO:0000250"/>
    <property type="project" value="UniProtKB"/>
</dbReference>
<dbReference type="GO" id="GO:0005654">
    <property type="term" value="C:nucleoplasm"/>
    <property type="evidence" value="ECO:0000250"/>
    <property type="project" value="UniProtKB"/>
</dbReference>
<dbReference type="GO" id="GO:0070545">
    <property type="term" value="C:PeBoW complex"/>
    <property type="evidence" value="ECO:0007669"/>
    <property type="project" value="TreeGrafter"/>
</dbReference>
<dbReference type="GO" id="GO:0030687">
    <property type="term" value="C:preribosome, large subunit precursor"/>
    <property type="evidence" value="ECO:0007669"/>
    <property type="project" value="UniProtKB-UniRule"/>
</dbReference>
<dbReference type="GO" id="GO:0043021">
    <property type="term" value="F:ribonucleoprotein complex binding"/>
    <property type="evidence" value="ECO:0007669"/>
    <property type="project" value="UniProtKB-UniRule"/>
</dbReference>
<dbReference type="GO" id="GO:0003723">
    <property type="term" value="F:RNA binding"/>
    <property type="evidence" value="ECO:0007669"/>
    <property type="project" value="TreeGrafter"/>
</dbReference>
<dbReference type="GO" id="GO:0000466">
    <property type="term" value="P:maturation of 5.8S rRNA from tricistronic rRNA transcript (SSU-rRNA, 5.8S rRNA, LSU-rRNA)"/>
    <property type="evidence" value="ECO:0007669"/>
    <property type="project" value="UniProtKB-UniRule"/>
</dbReference>
<dbReference type="GO" id="GO:0000463">
    <property type="term" value="P:maturation of LSU-rRNA from tricistronic rRNA transcript (SSU-rRNA, 5.8S rRNA, LSU-rRNA)"/>
    <property type="evidence" value="ECO:0000250"/>
    <property type="project" value="UniProtKB"/>
</dbReference>
<dbReference type="CDD" id="cd17709">
    <property type="entry name" value="BRCT_pescadillo_like"/>
    <property type="match status" value="1"/>
</dbReference>
<dbReference type="FunFam" id="3.40.50.10190:FF:000002">
    <property type="entry name" value="Pescadillo homolog"/>
    <property type="match status" value="1"/>
</dbReference>
<dbReference type="Gene3D" id="3.40.50.10190">
    <property type="entry name" value="BRCT domain"/>
    <property type="match status" value="1"/>
</dbReference>
<dbReference type="HAMAP" id="MF_03028">
    <property type="entry name" value="Pescadillo"/>
    <property type="match status" value="1"/>
</dbReference>
<dbReference type="InterPro" id="IPR001357">
    <property type="entry name" value="BRCT_dom"/>
</dbReference>
<dbReference type="InterPro" id="IPR036420">
    <property type="entry name" value="BRCT_dom_sf"/>
</dbReference>
<dbReference type="InterPro" id="IPR010613">
    <property type="entry name" value="PES"/>
</dbReference>
<dbReference type="PANTHER" id="PTHR12221">
    <property type="entry name" value="PESCADILLO - RELATED"/>
    <property type="match status" value="1"/>
</dbReference>
<dbReference type="PANTHER" id="PTHR12221:SF6">
    <property type="entry name" value="PESCADILLO HOMOLOG"/>
    <property type="match status" value="1"/>
</dbReference>
<dbReference type="Pfam" id="PF16589">
    <property type="entry name" value="BRCT_2"/>
    <property type="match status" value="1"/>
</dbReference>
<dbReference type="Pfam" id="PF06732">
    <property type="entry name" value="Pescadillo_N"/>
    <property type="match status" value="1"/>
</dbReference>
<dbReference type="SMART" id="SM00292">
    <property type="entry name" value="BRCT"/>
    <property type="match status" value="1"/>
</dbReference>
<dbReference type="SUPFAM" id="SSF52113">
    <property type="entry name" value="BRCT domain"/>
    <property type="match status" value="1"/>
</dbReference>
<dbReference type="PROSITE" id="PS50172">
    <property type="entry name" value="BRCT"/>
    <property type="match status" value="1"/>
</dbReference>
<keyword id="KW-0175">Coiled coil</keyword>
<keyword id="KW-0539">Nucleus</keyword>
<keyword id="KW-0597">Phosphoprotein</keyword>
<keyword id="KW-1185">Reference proteome</keyword>
<keyword id="KW-0690">Ribosome biogenesis</keyword>
<keyword id="KW-0698">rRNA processing</keyword>
<evidence type="ECO:0000250" key="1"/>
<evidence type="ECO:0000255" key="2">
    <source>
        <dbReference type="HAMAP-Rule" id="MF_03028"/>
    </source>
</evidence>
<evidence type="ECO:0000256" key="3">
    <source>
        <dbReference type="SAM" id="MobiDB-lite"/>
    </source>
</evidence>
<reference key="1">
    <citation type="journal article" date="2005" name="Genome Res.">
        <title>Comparative genome sequencing of Drosophila pseudoobscura: chromosomal, gene, and cis-element evolution.</title>
        <authorList>
            <person name="Richards S."/>
            <person name="Liu Y."/>
            <person name="Bettencourt B.R."/>
            <person name="Hradecky P."/>
            <person name="Letovsky S."/>
            <person name="Nielsen R."/>
            <person name="Thornton K."/>
            <person name="Hubisz M.J."/>
            <person name="Chen R."/>
            <person name="Meisel R.P."/>
            <person name="Couronne O."/>
            <person name="Hua S."/>
            <person name="Smith M.A."/>
            <person name="Zhang P."/>
            <person name="Liu J."/>
            <person name="Bussemaker H.J."/>
            <person name="van Batenburg M.F."/>
            <person name="Howells S.L."/>
            <person name="Scherer S.E."/>
            <person name="Sodergren E."/>
            <person name="Matthews B.B."/>
            <person name="Crosby M.A."/>
            <person name="Schroeder A.J."/>
            <person name="Ortiz-Barrientos D."/>
            <person name="Rives C.M."/>
            <person name="Metzker M.L."/>
            <person name="Muzny D.M."/>
            <person name="Scott G."/>
            <person name="Steffen D."/>
            <person name="Wheeler D.A."/>
            <person name="Worley K.C."/>
            <person name="Havlak P."/>
            <person name="Durbin K.J."/>
            <person name="Egan A."/>
            <person name="Gill R."/>
            <person name="Hume J."/>
            <person name="Morgan M.B."/>
            <person name="Miner G."/>
            <person name="Hamilton C."/>
            <person name="Huang Y."/>
            <person name="Waldron L."/>
            <person name="Verduzco D."/>
            <person name="Clerc-Blankenburg K.P."/>
            <person name="Dubchak I."/>
            <person name="Noor M.A.F."/>
            <person name="Anderson W."/>
            <person name="White K.P."/>
            <person name="Clark A.G."/>
            <person name="Schaeffer S.W."/>
            <person name="Gelbart W.M."/>
            <person name="Weinstock G.M."/>
            <person name="Gibbs R.A."/>
        </authorList>
    </citation>
    <scope>NUCLEOTIDE SEQUENCE [LARGE SCALE GENOMIC DNA]</scope>
    <source>
        <strain>MV2-25 / Tucson 14011-0121.94</strain>
    </source>
</reference>
<gene>
    <name type="ORF">GA18135</name>
</gene>
<feature type="chain" id="PRO_0000370458" description="Pescadillo homolog">
    <location>
        <begin position="1"/>
        <end position="631"/>
    </location>
</feature>
<feature type="domain" description="BRCT" evidence="2">
    <location>
        <begin position="321"/>
        <end position="414"/>
    </location>
</feature>
<feature type="region of interest" description="Disordered" evidence="3">
    <location>
        <begin position="428"/>
        <end position="471"/>
    </location>
</feature>
<feature type="region of interest" description="Disordered" evidence="3">
    <location>
        <begin position="489"/>
        <end position="561"/>
    </location>
</feature>
<feature type="region of interest" description="Disordered" evidence="3">
    <location>
        <begin position="602"/>
        <end position="631"/>
    </location>
</feature>
<feature type="coiled-coil region" evidence="2">
    <location>
        <begin position="591"/>
        <end position="631"/>
    </location>
</feature>
<feature type="compositionally biased region" description="Basic and acidic residues" evidence="3">
    <location>
        <begin position="428"/>
        <end position="442"/>
    </location>
</feature>
<feature type="compositionally biased region" description="Acidic residues" evidence="3">
    <location>
        <begin position="453"/>
        <end position="471"/>
    </location>
</feature>
<feature type="compositionally biased region" description="Acidic residues" evidence="3">
    <location>
        <begin position="498"/>
        <end position="525"/>
    </location>
</feature>
<feature type="compositionally biased region" description="Basic and acidic residues" evidence="3">
    <location>
        <begin position="526"/>
        <end position="538"/>
    </location>
</feature>
<feature type="compositionally biased region" description="Basic residues" evidence="3">
    <location>
        <begin position="544"/>
        <end position="553"/>
    </location>
</feature>
<feature type="compositionally biased region" description="Basic and acidic residues" evidence="3">
    <location>
        <begin position="602"/>
        <end position="619"/>
    </location>
</feature>
<feature type="compositionally biased region" description="Low complexity" evidence="3">
    <location>
        <begin position="620"/>
        <end position="631"/>
    </location>
</feature>
<feature type="modified residue" description="Phosphoserine" evidence="1">
    <location>
        <position position="453"/>
    </location>
</feature>
<feature type="modified residue" description="Phosphoserine" evidence="1">
    <location>
        <position position="457"/>
    </location>
</feature>